<name>RSMA_BRUA4</name>
<gene>
    <name evidence="1" type="primary">rsmA</name>
    <name evidence="1" type="synonym">ksgA</name>
    <name type="ordered locus">Oant_2606</name>
</gene>
<keyword id="KW-0963">Cytoplasm</keyword>
<keyword id="KW-0489">Methyltransferase</keyword>
<keyword id="KW-1185">Reference proteome</keyword>
<keyword id="KW-0694">RNA-binding</keyword>
<keyword id="KW-0698">rRNA processing</keyword>
<keyword id="KW-0949">S-adenosyl-L-methionine</keyword>
<keyword id="KW-0808">Transferase</keyword>
<evidence type="ECO:0000255" key="1">
    <source>
        <dbReference type="HAMAP-Rule" id="MF_00607"/>
    </source>
</evidence>
<sequence>MSIDGLPPLREVIERHDLMPKKSLGQNFLFDLNLTSKIARQAGNLQDQPVIEVGPGPGGLTRALLAQGAYVTAIERDERCLDALAEIEAHYPGRLRIISGDALEQDFSALFPDGPKPRIVANLPYNVGTQLLLNWLLVEPWPPFYSSMTLMFQREVAERIVATPDSDHYGRLGVLAGWRTVSKISFDVPPQAFTPPPKVMSSVVHIIPRENPLPCNANALGQITQAAFGQRRKMLRQSLKPVGGAELLEKTGIDGTRRAETLSVEEFVALANAYRPIK</sequence>
<dbReference type="EC" id="2.1.1.182" evidence="1"/>
<dbReference type="EMBL" id="CP000758">
    <property type="protein sequence ID" value="ABS15319.1"/>
    <property type="molecule type" value="Genomic_DNA"/>
</dbReference>
<dbReference type="RefSeq" id="WP_012092394.1">
    <property type="nucleotide sequence ID" value="NC_009667.1"/>
</dbReference>
<dbReference type="SMR" id="A6X265"/>
<dbReference type="STRING" id="439375.Oant_2606"/>
<dbReference type="KEGG" id="oan:Oant_2606"/>
<dbReference type="PATRIC" id="fig|439375.7.peg.2747"/>
<dbReference type="eggNOG" id="COG0030">
    <property type="taxonomic scope" value="Bacteria"/>
</dbReference>
<dbReference type="HOGENOM" id="CLU_041220_0_1_5"/>
<dbReference type="PhylomeDB" id="A6X265"/>
<dbReference type="Proteomes" id="UP000002301">
    <property type="component" value="Chromosome 1"/>
</dbReference>
<dbReference type="GO" id="GO:0005829">
    <property type="term" value="C:cytosol"/>
    <property type="evidence" value="ECO:0007669"/>
    <property type="project" value="TreeGrafter"/>
</dbReference>
<dbReference type="GO" id="GO:0052908">
    <property type="term" value="F:16S rRNA (adenine(1518)-N(6)/adenine(1519)-N(6))-dimethyltransferase activity"/>
    <property type="evidence" value="ECO:0007669"/>
    <property type="project" value="UniProtKB-EC"/>
</dbReference>
<dbReference type="GO" id="GO:0003723">
    <property type="term" value="F:RNA binding"/>
    <property type="evidence" value="ECO:0007669"/>
    <property type="project" value="UniProtKB-KW"/>
</dbReference>
<dbReference type="CDD" id="cd02440">
    <property type="entry name" value="AdoMet_MTases"/>
    <property type="match status" value="1"/>
</dbReference>
<dbReference type="FunFam" id="1.10.8.100:FF:000001">
    <property type="entry name" value="Ribosomal RNA small subunit methyltransferase A"/>
    <property type="match status" value="1"/>
</dbReference>
<dbReference type="Gene3D" id="1.10.8.100">
    <property type="entry name" value="Ribosomal RNA adenine dimethylase-like, domain 2"/>
    <property type="match status" value="1"/>
</dbReference>
<dbReference type="Gene3D" id="3.40.50.150">
    <property type="entry name" value="Vaccinia Virus protein VP39"/>
    <property type="match status" value="1"/>
</dbReference>
<dbReference type="HAMAP" id="MF_00607">
    <property type="entry name" value="16SrRNA_methyltr_A"/>
    <property type="match status" value="1"/>
</dbReference>
<dbReference type="InterPro" id="IPR001737">
    <property type="entry name" value="KsgA/Erm"/>
</dbReference>
<dbReference type="InterPro" id="IPR023165">
    <property type="entry name" value="rRNA_Ade_diMease-like_C"/>
</dbReference>
<dbReference type="InterPro" id="IPR020596">
    <property type="entry name" value="rRNA_Ade_Mease_Trfase_CS"/>
</dbReference>
<dbReference type="InterPro" id="IPR020598">
    <property type="entry name" value="rRNA_Ade_methylase_Trfase_N"/>
</dbReference>
<dbReference type="InterPro" id="IPR011530">
    <property type="entry name" value="rRNA_adenine_dimethylase"/>
</dbReference>
<dbReference type="InterPro" id="IPR029063">
    <property type="entry name" value="SAM-dependent_MTases_sf"/>
</dbReference>
<dbReference type="NCBIfam" id="TIGR00755">
    <property type="entry name" value="ksgA"/>
    <property type="match status" value="1"/>
</dbReference>
<dbReference type="PANTHER" id="PTHR11727">
    <property type="entry name" value="DIMETHYLADENOSINE TRANSFERASE"/>
    <property type="match status" value="1"/>
</dbReference>
<dbReference type="PANTHER" id="PTHR11727:SF7">
    <property type="entry name" value="DIMETHYLADENOSINE TRANSFERASE-RELATED"/>
    <property type="match status" value="1"/>
</dbReference>
<dbReference type="Pfam" id="PF00398">
    <property type="entry name" value="RrnaAD"/>
    <property type="match status" value="1"/>
</dbReference>
<dbReference type="SMART" id="SM00650">
    <property type="entry name" value="rADc"/>
    <property type="match status" value="1"/>
</dbReference>
<dbReference type="SUPFAM" id="SSF53335">
    <property type="entry name" value="S-adenosyl-L-methionine-dependent methyltransferases"/>
    <property type="match status" value="1"/>
</dbReference>
<dbReference type="PROSITE" id="PS01131">
    <property type="entry name" value="RRNA_A_DIMETH"/>
    <property type="match status" value="1"/>
</dbReference>
<dbReference type="PROSITE" id="PS51689">
    <property type="entry name" value="SAM_RNA_A_N6_MT"/>
    <property type="match status" value="1"/>
</dbReference>
<accession>A6X265</accession>
<protein>
    <recommendedName>
        <fullName evidence="1">Ribosomal RNA small subunit methyltransferase A</fullName>
        <ecNumber evidence="1">2.1.1.182</ecNumber>
    </recommendedName>
    <alternativeName>
        <fullName evidence="1">16S rRNA (adenine(1518)-N(6)/adenine(1519)-N(6))-dimethyltransferase</fullName>
    </alternativeName>
    <alternativeName>
        <fullName evidence="1">16S rRNA dimethyladenosine transferase</fullName>
    </alternativeName>
    <alternativeName>
        <fullName evidence="1">16S rRNA dimethylase</fullName>
    </alternativeName>
    <alternativeName>
        <fullName evidence="1">S-adenosylmethionine-6-N', N'-adenosyl(rRNA) dimethyltransferase</fullName>
    </alternativeName>
</protein>
<proteinExistence type="inferred from homology"/>
<reference key="1">
    <citation type="journal article" date="2011" name="J. Bacteriol.">
        <title>Genome of Ochrobactrum anthropi ATCC 49188 T, a versatile opportunistic pathogen and symbiont of several eukaryotic hosts.</title>
        <authorList>
            <person name="Chain P.S."/>
            <person name="Lang D.M."/>
            <person name="Comerci D.J."/>
            <person name="Malfatti S.A."/>
            <person name="Vergez L.M."/>
            <person name="Shin M."/>
            <person name="Ugalde R.A."/>
            <person name="Garcia E."/>
            <person name="Tolmasky M.E."/>
        </authorList>
    </citation>
    <scope>NUCLEOTIDE SEQUENCE [LARGE SCALE GENOMIC DNA]</scope>
    <source>
        <strain>ATCC 49188 / DSM 6882 / CCUG 24695 / JCM 21032 / LMG 3331 / NBRC 15819 / NCTC 12168 / Alc 37</strain>
    </source>
</reference>
<organism>
    <name type="scientific">Brucella anthropi (strain ATCC 49188 / DSM 6882 / CCUG 24695 / JCM 21032 / LMG 3331 / NBRC 15819 / NCTC 12168 / Alc 37)</name>
    <name type="common">Ochrobactrum anthropi</name>
    <dbReference type="NCBI Taxonomy" id="439375"/>
    <lineage>
        <taxon>Bacteria</taxon>
        <taxon>Pseudomonadati</taxon>
        <taxon>Pseudomonadota</taxon>
        <taxon>Alphaproteobacteria</taxon>
        <taxon>Hyphomicrobiales</taxon>
        <taxon>Brucellaceae</taxon>
        <taxon>Brucella/Ochrobactrum group</taxon>
        <taxon>Brucella</taxon>
    </lineage>
</organism>
<comment type="function">
    <text evidence="1">Specifically dimethylates two adjacent adenosines (A1518 and A1519) in the loop of a conserved hairpin near the 3'-end of 16S rRNA in the 30S particle. May play a critical role in biogenesis of 30S subunits.</text>
</comment>
<comment type="catalytic activity">
    <reaction evidence="1">
        <text>adenosine(1518)/adenosine(1519) in 16S rRNA + 4 S-adenosyl-L-methionine = N(6)-dimethyladenosine(1518)/N(6)-dimethyladenosine(1519) in 16S rRNA + 4 S-adenosyl-L-homocysteine + 4 H(+)</text>
        <dbReference type="Rhea" id="RHEA:19609"/>
        <dbReference type="Rhea" id="RHEA-COMP:10232"/>
        <dbReference type="Rhea" id="RHEA-COMP:10233"/>
        <dbReference type="ChEBI" id="CHEBI:15378"/>
        <dbReference type="ChEBI" id="CHEBI:57856"/>
        <dbReference type="ChEBI" id="CHEBI:59789"/>
        <dbReference type="ChEBI" id="CHEBI:74411"/>
        <dbReference type="ChEBI" id="CHEBI:74493"/>
        <dbReference type="EC" id="2.1.1.182"/>
    </reaction>
</comment>
<comment type="subcellular location">
    <subcellularLocation>
        <location evidence="1">Cytoplasm</location>
    </subcellularLocation>
</comment>
<comment type="similarity">
    <text evidence="1">Belongs to the class I-like SAM-binding methyltransferase superfamily. rRNA adenine N(6)-methyltransferase family. RsmA subfamily.</text>
</comment>
<feature type="chain" id="PRO_1000056644" description="Ribosomal RNA small subunit methyltransferase A">
    <location>
        <begin position="1"/>
        <end position="278"/>
    </location>
</feature>
<feature type="binding site" evidence="1">
    <location>
        <position position="27"/>
    </location>
    <ligand>
        <name>S-adenosyl-L-methionine</name>
        <dbReference type="ChEBI" id="CHEBI:59789"/>
    </ligand>
</feature>
<feature type="binding site" evidence="1">
    <location>
        <position position="29"/>
    </location>
    <ligand>
        <name>S-adenosyl-L-methionine</name>
        <dbReference type="ChEBI" id="CHEBI:59789"/>
    </ligand>
</feature>
<feature type="binding site" evidence="1">
    <location>
        <position position="54"/>
    </location>
    <ligand>
        <name>S-adenosyl-L-methionine</name>
        <dbReference type="ChEBI" id="CHEBI:59789"/>
    </ligand>
</feature>
<feature type="binding site" evidence="1">
    <location>
        <position position="75"/>
    </location>
    <ligand>
        <name>S-adenosyl-L-methionine</name>
        <dbReference type="ChEBI" id="CHEBI:59789"/>
    </ligand>
</feature>
<feature type="binding site" evidence="1">
    <location>
        <position position="101"/>
    </location>
    <ligand>
        <name>S-adenosyl-L-methionine</name>
        <dbReference type="ChEBI" id="CHEBI:59789"/>
    </ligand>
</feature>
<feature type="binding site" evidence="1">
    <location>
        <position position="122"/>
    </location>
    <ligand>
        <name>S-adenosyl-L-methionine</name>
        <dbReference type="ChEBI" id="CHEBI:59789"/>
    </ligand>
</feature>